<name>DDIT4_MOUSE</name>
<protein>
    <recommendedName>
        <fullName>DNA damage-inducible transcript 4 protein</fullName>
    </recommendedName>
    <alternativeName>
        <fullName>Dexamethasone-induced gene 2 protein</fullName>
    </alternativeName>
    <alternativeName>
        <fullName>HIF-1 responsive protein RTP801</fullName>
    </alternativeName>
    <alternativeName>
        <fullName>Protein regulated in development and DNA damage response 1</fullName>
        <shortName>REDD-1</shortName>
    </alternativeName>
</protein>
<reference key="1">
    <citation type="journal article" date="2003" name="J. Biol. Chem.">
        <title>Dexamethasone-induced gene 2 (dig2) is a novel pro-survival stress gene induced rapidly by diverse apoptotic signals.</title>
        <authorList>
            <person name="Wang Z."/>
            <person name="Malone M.H."/>
            <person name="Thomenius M.J."/>
            <person name="Zhong F."/>
            <person name="Xu F."/>
            <person name="Distelhorst C.W."/>
        </authorList>
    </citation>
    <scope>NUCLEOTIDE SEQUENCE [MRNA]</scope>
    <scope>TISSUE SPECIFICITY</scope>
    <scope>DEVELOPMENTAL STAGE</scope>
    <source>
        <strain>C57BL/6J</strain>
        <tissue>Thymus</tissue>
    </source>
</reference>
<reference key="2">
    <citation type="journal article" date="2005" name="Science">
        <title>The transcriptional landscape of the mammalian genome.</title>
        <authorList>
            <person name="Carninci P."/>
            <person name="Kasukawa T."/>
            <person name="Katayama S."/>
            <person name="Gough J."/>
            <person name="Frith M.C."/>
            <person name="Maeda N."/>
            <person name="Oyama R."/>
            <person name="Ravasi T."/>
            <person name="Lenhard B."/>
            <person name="Wells C."/>
            <person name="Kodzius R."/>
            <person name="Shimokawa K."/>
            <person name="Bajic V.B."/>
            <person name="Brenner S.E."/>
            <person name="Batalov S."/>
            <person name="Forrest A.R."/>
            <person name="Zavolan M."/>
            <person name="Davis M.J."/>
            <person name="Wilming L.G."/>
            <person name="Aidinis V."/>
            <person name="Allen J.E."/>
            <person name="Ambesi-Impiombato A."/>
            <person name="Apweiler R."/>
            <person name="Aturaliya R.N."/>
            <person name="Bailey T.L."/>
            <person name="Bansal M."/>
            <person name="Baxter L."/>
            <person name="Beisel K.W."/>
            <person name="Bersano T."/>
            <person name="Bono H."/>
            <person name="Chalk A.M."/>
            <person name="Chiu K.P."/>
            <person name="Choudhary V."/>
            <person name="Christoffels A."/>
            <person name="Clutterbuck D.R."/>
            <person name="Crowe M.L."/>
            <person name="Dalla E."/>
            <person name="Dalrymple B.P."/>
            <person name="de Bono B."/>
            <person name="Della Gatta G."/>
            <person name="di Bernardo D."/>
            <person name="Down T."/>
            <person name="Engstrom P."/>
            <person name="Fagiolini M."/>
            <person name="Faulkner G."/>
            <person name="Fletcher C.F."/>
            <person name="Fukushima T."/>
            <person name="Furuno M."/>
            <person name="Futaki S."/>
            <person name="Gariboldi M."/>
            <person name="Georgii-Hemming P."/>
            <person name="Gingeras T.R."/>
            <person name="Gojobori T."/>
            <person name="Green R.E."/>
            <person name="Gustincich S."/>
            <person name="Harbers M."/>
            <person name="Hayashi Y."/>
            <person name="Hensch T.K."/>
            <person name="Hirokawa N."/>
            <person name="Hill D."/>
            <person name="Huminiecki L."/>
            <person name="Iacono M."/>
            <person name="Ikeo K."/>
            <person name="Iwama A."/>
            <person name="Ishikawa T."/>
            <person name="Jakt M."/>
            <person name="Kanapin A."/>
            <person name="Katoh M."/>
            <person name="Kawasawa Y."/>
            <person name="Kelso J."/>
            <person name="Kitamura H."/>
            <person name="Kitano H."/>
            <person name="Kollias G."/>
            <person name="Krishnan S.P."/>
            <person name="Kruger A."/>
            <person name="Kummerfeld S.K."/>
            <person name="Kurochkin I.V."/>
            <person name="Lareau L.F."/>
            <person name="Lazarevic D."/>
            <person name="Lipovich L."/>
            <person name="Liu J."/>
            <person name="Liuni S."/>
            <person name="McWilliam S."/>
            <person name="Madan Babu M."/>
            <person name="Madera M."/>
            <person name="Marchionni L."/>
            <person name="Matsuda H."/>
            <person name="Matsuzawa S."/>
            <person name="Miki H."/>
            <person name="Mignone F."/>
            <person name="Miyake S."/>
            <person name="Morris K."/>
            <person name="Mottagui-Tabar S."/>
            <person name="Mulder N."/>
            <person name="Nakano N."/>
            <person name="Nakauchi H."/>
            <person name="Ng P."/>
            <person name="Nilsson R."/>
            <person name="Nishiguchi S."/>
            <person name="Nishikawa S."/>
            <person name="Nori F."/>
            <person name="Ohara O."/>
            <person name="Okazaki Y."/>
            <person name="Orlando V."/>
            <person name="Pang K.C."/>
            <person name="Pavan W.J."/>
            <person name="Pavesi G."/>
            <person name="Pesole G."/>
            <person name="Petrovsky N."/>
            <person name="Piazza S."/>
            <person name="Reed J."/>
            <person name="Reid J.F."/>
            <person name="Ring B.Z."/>
            <person name="Ringwald M."/>
            <person name="Rost B."/>
            <person name="Ruan Y."/>
            <person name="Salzberg S.L."/>
            <person name="Sandelin A."/>
            <person name="Schneider C."/>
            <person name="Schoenbach C."/>
            <person name="Sekiguchi K."/>
            <person name="Semple C.A."/>
            <person name="Seno S."/>
            <person name="Sessa L."/>
            <person name="Sheng Y."/>
            <person name="Shibata Y."/>
            <person name="Shimada H."/>
            <person name="Shimada K."/>
            <person name="Silva D."/>
            <person name="Sinclair B."/>
            <person name="Sperling S."/>
            <person name="Stupka E."/>
            <person name="Sugiura K."/>
            <person name="Sultana R."/>
            <person name="Takenaka Y."/>
            <person name="Taki K."/>
            <person name="Tammoja K."/>
            <person name="Tan S.L."/>
            <person name="Tang S."/>
            <person name="Taylor M.S."/>
            <person name="Tegner J."/>
            <person name="Teichmann S.A."/>
            <person name="Ueda H.R."/>
            <person name="van Nimwegen E."/>
            <person name="Verardo R."/>
            <person name="Wei C.L."/>
            <person name="Yagi K."/>
            <person name="Yamanishi H."/>
            <person name="Zabarovsky E."/>
            <person name="Zhu S."/>
            <person name="Zimmer A."/>
            <person name="Hide W."/>
            <person name="Bult C."/>
            <person name="Grimmond S.M."/>
            <person name="Teasdale R.D."/>
            <person name="Liu E.T."/>
            <person name="Brusic V."/>
            <person name="Quackenbush J."/>
            <person name="Wahlestedt C."/>
            <person name="Mattick J.S."/>
            <person name="Hume D.A."/>
            <person name="Kai C."/>
            <person name="Sasaki D."/>
            <person name="Tomaru Y."/>
            <person name="Fukuda S."/>
            <person name="Kanamori-Katayama M."/>
            <person name="Suzuki M."/>
            <person name="Aoki J."/>
            <person name="Arakawa T."/>
            <person name="Iida J."/>
            <person name="Imamura K."/>
            <person name="Itoh M."/>
            <person name="Kato T."/>
            <person name="Kawaji H."/>
            <person name="Kawagashira N."/>
            <person name="Kawashima T."/>
            <person name="Kojima M."/>
            <person name="Kondo S."/>
            <person name="Konno H."/>
            <person name="Nakano K."/>
            <person name="Ninomiya N."/>
            <person name="Nishio T."/>
            <person name="Okada M."/>
            <person name="Plessy C."/>
            <person name="Shibata K."/>
            <person name="Shiraki T."/>
            <person name="Suzuki S."/>
            <person name="Tagami M."/>
            <person name="Waki K."/>
            <person name="Watahiki A."/>
            <person name="Okamura-Oho Y."/>
            <person name="Suzuki H."/>
            <person name="Kawai J."/>
            <person name="Hayashizaki Y."/>
        </authorList>
    </citation>
    <scope>NUCLEOTIDE SEQUENCE [LARGE SCALE MRNA]</scope>
    <source>
        <strain>C57BL/6J</strain>
        <tissue>Cerebellum</tissue>
        <tissue>Thymus</tissue>
    </source>
</reference>
<reference key="3">
    <citation type="journal article" date="2004" name="Genome Res.">
        <title>The status, quality, and expansion of the NIH full-length cDNA project: the Mammalian Gene Collection (MGC).</title>
        <authorList>
            <consortium name="The MGC Project Team"/>
        </authorList>
    </citation>
    <scope>NUCLEOTIDE SEQUENCE [LARGE SCALE MRNA]</scope>
    <source>
        <tissue>Brain</tissue>
    </source>
</reference>
<reference key="4">
    <citation type="journal article" date="2002" name="Mol. Cell">
        <title>REDD1, a developmentally regulated transcriptional target of p63 and p53, links p63 to regulation of reactive oxygen species.</title>
        <authorList>
            <person name="Ellisen L.W."/>
            <person name="Ramsayer K.D."/>
            <person name="Johannessen C.M."/>
            <person name="Yang A."/>
            <person name="Beppu H."/>
            <person name="Minda K."/>
            <person name="Oliner J.D."/>
            <person name="McKeon F."/>
            <person name="Haber D.A."/>
        </authorList>
    </citation>
    <scope>IDENTIFICATION</scope>
    <scope>DEVELOPMENTAL STAGE</scope>
    <scope>INDUCTION</scope>
</reference>
<reference key="5">
    <citation type="journal article" date="2002" name="Mol. Cell. Biol.">
        <title>Identification of a novel hypoxia-inducible factor 1-responsive gene, RTP801, involved in apoptosis.</title>
        <authorList>
            <person name="Shoshani T."/>
            <person name="Faerman A."/>
            <person name="Mett I."/>
            <person name="Zelin E."/>
            <person name="Tenne T."/>
            <person name="Gorodin S."/>
            <person name="Moshel Y."/>
            <person name="Elbaz S."/>
            <person name="Budanov A."/>
            <person name="Chajut A."/>
            <person name="Kalinski H."/>
            <person name="Kamer I."/>
            <person name="Rozen A."/>
            <person name="Mor O."/>
            <person name="Keshet E."/>
            <person name="Leshkowitz D."/>
            <person name="Einat P."/>
            <person name="Skaliter R."/>
            <person name="Feinstein E."/>
        </authorList>
    </citation>
    <scope>INDUCTION</scope>
</reference>
<reference key="6">
    <citation type="journal article" date="2004" name="Genes Dev.">
        <title>Regulation of mTOR function in response to hypoxia by REDD1 and the TSC1/TSC2 tumor suppressor complex.</title>
        <authorList>
            <person name="Brugarolas J."/>
            <person name="Lei K."/>
            <person name="Hurley R.L."/>
            <person name="Manning B.D."/>
            <person name="Reiling J.H."/>
            <person name="Hafen E."/>
            <person name="Witters L.A."/>
            <person name="Ellisen L.W."/>
            <person name="Kaelin W.G. Jr."/>
        </authorList>
    </citation>
    <scope>INDUCTION</scope>
    <scope>FUNCTION</scope>
</reference>
<reference key="7">
    <citation type="journal article" date="2004" name="Invest. Ophthalmol. Vis. Sci.">
        <title>Inhibition of oxygen-induced retinopathy in RTP801-deficient mice.</title>
        <authorList>
            <person name="Brafman A."/>
            <person name="Mett I."/>
            <person name="Shafir M."/>
            <person name="Gottlieb H."/>
            <person name="Damari G."/>
            <person name="Gozlan-Kelner S."/>
            <person name="Vishnevskia-Dai V."/>
            <person name="Skaliter R."/>
            <person name="Einat P."/>
            <person name="Faerman A."/>
            <person name="Feinstein E."/>
            <person name="Shoshani T."/>
        </authorList>
    </citation>
    <scope>INDUCTION</scope>
    <scope>DISRUPTION PHENOTYPE</scope>
</reference>
<reference key="8">
    <citation type="journal article" date="2005" name="Mol. Cell. Biol.">
        <title>Regulation of mTOR and cell growth in response to energy stress by REDD1.</title>
        <authorList>
            <person name="Sofer A."/>
            <person name="Lei K."/>
            <person name="Johannessen C.M."/>
            <person name="Ellisen L.W."/>
        </authorList>
    </citation>
    <scope>DISRUPTION PHENOTYPE</scope>
    <scope>FUNCTION</scope>
    <scope>INDUCTION</scope>
</reference>
<reference key="9">
    <citation type="journal article" date="2006" name="J. Neurosci.">
        <title>RTP801 is elevated in Parkinson brain substantia nigral neurons and mediates death in cellular models of Parkinson's disease by a mechanism involving mammalian target of rapamycin inactivation.</title>
        <authorList>
            <person name="Malagelada C."/>
            <person name="Ryu E.J."/>
            <person name="Biswas S.C."/>
            <person name="Jackson-Lewis V."/>
            <person name="Greene L.A."/>
        </authorList>
    </citation>
    <scope>INDUCTION</scope>
</reference>
<reference key="10">
    <citation type="journal article" date="2010" name="Proc. Natl. Acad. Sci. U.S.A.">
        <title>Negative feedback control of HIF-1 through REDD1-regulated ROS suppresses tumorigenesis.</title>
        <authorList>
            <person name="Horak P."/>
            <person name="Crawford A.R."/>
            <person name="Vadysirisack D.D."/>
            <person name="Nash Z.M."/>
            <person name="DeYoung M.P."/>
            <person name="Sgroi D."/>
            <person name="Ellisen L.W."/>
        </authorList>
    </citation>
    <scope>DISRUPTION PHENOTYPE</scope>
    <scope>FUNCTION</scope>
    <scope>SUBCELLULAR LOCATION</scope>
</reference>
<reference key="11">
    <citation type="journal article" date="2011" name="Mol. Cell. Biol.">
        <title>Cell-type-dependent regulation of mTORC1 by REDD1 and the tumor suppressors TSC1/TSC2 and LKB1 in response to hypoxia.</title>
        <authorList>
            <person name="Wolff N.C."/>
            <person name="Vega-Rubin-de-Celis S."/>
            <person name="Xie X.J."/>
            <person name="Castrillon D.H."/>
            <person name="Kabbani W."/>
            <person name="Brugarolas J."/>
        </authorList>
    </citation>
    <scope>FUNCTION</scope>
    <scope>INDUCTION</scope>
    <scope>TISSUE SPECIFICITY</scope>
</reference>
<reference key="12">
    <citation type="journal article" date="2011" name="Mol. Cell. Biol.">
        <title>Feedback control of p53 translation by REDD1 and mTORC1 limits the p53-dependent DNA damage response.</title>
        <authorList>
            <person name="Vadysirisack D.D."/>
            <person name="Baenke F."/>
            <person name="Ory B."/>
            <person name="Lei K."/>
            <person name="Ellisen L.W."/>
        </authorList>
    </citation>
    <scope>FUNCTION</scope>
    <scope>DISRUPTION PHENOTYPE</scope>
</reference>
<reference key="13">
    <citation type="journal article" date="2011" name="Nat. Chem. Biol.">
        <title>Chemical inhibition of RNA viruses reveals REDD1 as a host defense factor.</title>
        <authorList>
            <person name="Mata M.A."/>
            <person name="Satterly N."/>
            <person name="Versteeg G.A."/>
            <person name="Frantz D."/>
            <person name="Wei S."/>
            <person name="Williams N."/>
            <person name="Schmolke M."/>
            <person name="Pena-Llopis S."/>
            <person name="Brugarolas J."/>
            <person name="Forst C.V."/>
            <person name="White M.A."/>
            <person name="Garcia-Sastre A."/>
            <person name="Roth M.G."/>
            <person name="Fontoura B.M."/>
        </authorList>
    </citation>
    <scope>FUNCTION</scope>
    <scope>DISRUPTION PHENOTYPE</scope>
</reference>
<comment type="function">
    <text evidence="8 9 11 12 13 14">Regulates cell growth, proliferation and survival via inhibition of the activity of the mammalian target of rapamycin complex 1 (mTORC1). Inhibition of mTORC1 is mediated by a pathway that involves DDIT4/REDD1, AKT1, the TSC1-TSC2 complex and the GTPase RHEB. Plays an important role in responses to cellular energy levels and cellular stress, including responses to hypoxia and DNA damage. Regulates p53/TP53-mediated apoptosis in response to DNA damage via its effect on mTORC1 activity. Its role in the response to hypoxia depends on the cell type; it mediates mTORC1 inhibition in fibroblasts and thymocytes, but not in hepatocytes. Inhibits neuronal differentiation and neurite outgrowth mediated by NGF via its effect on mTORC1 activity. Required for normal neuron migration during embryonic brain development. Plays a role in neuronal cell death. Required for mTORC1-mediated defense against viral protein synthesis and virus replication.</text>
</comment>
<comment type="subunit">
    <text evidence="1">Monomer. Interacts with BTRC. Identified in a complex with CUL4A, DDB1 and BTRC. Interacts with TXNIP; this inhibits the proteasomal degradation of DDIT4 (By similarity).</text>
</comment>
<comment type="subcellular location">
    <subcellularLocation>
        <location evidence="11">Mitochondrion</location>
    </subcellularLocation>
    <subcellularLocation>
        <location evidence="11">Cytoplasm</location>
        <location evidence="11">Cytosol</location>
    </subcellularLocation>
</comment>
<comment type="tissue specificity">
    <text evidence="6 12">Ubiquitously expressed.</text>
</comment>
<comment type="developmental stage">
    <text evidence="5 6">Expressed at 7 dpc. At 11 dpc, expressed in the apical ectodermal ridge. At 13.5 dpc, expressed in the whisker pad, eyelid, breast primordia and developing limb. At 14.5 dpc, expressed in supraorbital and suborbital follicles, whisker pad, limbs and patches of developing epidermis.</text>
</comment>
<comment type="induction">
    <text evidence="4 5 7 8 9 10 12">By dexamethasone, heat-shock or osmotic stress. Up-regulated by hypoxia, in a HIF1A-dependent but TP53-independent mechanism. Up-regulated upon energy stress. Up-regulated in brain from MPTP-intoxicated mice, a model for Parkinson disease (at protein level). Up-regulated by hypoxia in bowel, liver, spleen, heart, lung, brain and kidney.</text>
</comment>
<comment type="PTM">
    <text evidence="1">Phosphorylated by GSK3B; this promotes proteasomal degradation.</text>
</comment>
<comment type="PTM">
    <text evidence="1">Polyubiquitinated by a DCX (DDB1-CUL4A-RBX1) E3 ubiquitin-protein ligase complex with BTRC as substrate-recognition component, leading to its proteasomal degradation.</text>
</comment>
<comment type="disruption phenotype">
    <text evidence="7 9 11 13 14">No visible phenotype. Mice are normal and less sensitive to oxygen-induced retinopathy. Mitochondria show increased production of reactive oxygen species. Newborn mice show increased radiation-induced apoptosis in brain and thymus, due to increased levels of TP53 and increased TP53 activity. Likewise, cultured embryonic fibroblasts are highly sensitive to DNA damage caused by UV irradiation or doxomycin and display increased levels of TP53 and increased TP53 activity, leading to increased apoptosis. Cultured embryonic fibroblasts are more susceptible to cell death caused by influenza virus infection and produce about 200 times more virus particles than wild-type.</text>
</comment>
<comment type="similarity">
    <text evidence="15">Belongs to the DDIT4 family.</text>
</comment>
<dbReference type="EMBL" id="AY260552">
    <property type="protein sequence ID" value="AAP13851.1"/>
    <property type="molecule type" value="mRNA"/>
</dbReference>
<dbReference type="EMBL" id="AK017926">
    <property type="protein sequence ID" value="BAB31006.1"/>
    <property type="molecule type" value="mRNA"/>
</dbReference>
<dbReference type="EMBL" id="AK081046">
    <property type="protein sequence ID" value="BAC38121.1"/>
    <property type="molecule type" value="mRNA"/>
</dbReference>
<dbReference type="EMBL" id="BC131992">
    <property type="protein sequence ID" value="AAI31993.1"/>
    <property type="molecule type" value="mRNA"/>
</dbReference>
<dbReference type="EMBL" id="BC132645">
    <property type="protein sequence ID" value="AAI32646.1"/>
    <property type="molecule type" value="mRNA"/>
</dbReference>
<dbReference type="CCDS" id="CCDS23868.1"/>
<dbReference type="RefSeq" id="NP_083359.1">
    <property type="nucleotide sequence ID" value="NM_029083.2"/>
</dbReference>
<dbReference type="SMR" id="Q9D3F7"/>
<dbReference type="FunCoup" id="Q9D3F7">
    <property type="interactions" value="1995"/>
</dbReference>
<dbReference type="STRING" id="10090.ENSMUSP00000020308"/>
<dbReference type="iPTMnet" id="Q9D3F7"/>
<dbReference type="PhosphoSitePlus" id="Q9D3F7"/>
<dbReference type="PaxDb" id="10090-ENSMUSP00000020308"/>
<dbReference type="ProteomicsDB" id="279897"/>
<dbReference type="Antibodypedia" id="29243">
    <property type="antibodies" value="330 antibodies from 38 providers"/>
</dbReference>
<dbReference type="DNASU" id="74747"/>
<dbReference type="Ensembl" id="ENSMUST00000020308.5">
    <property type="protein sequence ID" value="ENSMUSP00000020308.4"/>
    <property type="gene ID" value="ENSMUSG00000020108.5"/>
</dbReference>
<dbReference type="GeneID" id="74747"/>
<dbReference type="KEGG" id="mmu:74747"/>
<dbReference type="UCSC" id="uc007fee.1">
    <property type="organism name" value="mouse"/>
</dbReference>
<dbReference type="AGR" id="MGI:1921997"/>
<dbReference type="CTD" id="54541"/>
<dbReference type="MGI" id="MGI:1921997">
    <property type="gene designation" value="Ddit4"/>
</dbReference>
<dbReference type="VEuPathDB" id="HostDB:ENSMUSG00000020108"/>
<dbReference type="eggNOG" id="ENOG502RB72">
    <property type="taxonomic scope" value="Eukaryota"/>
</dbReference>
<dbReference type="GeneTree" id="ENSGT00530000063652"/>
<dbReference type="HOGENOM" id="CLU_086145_1_0_1"/>
<dbReference type="InParanoid" id="Q9D3F7"/>
<dbReference type="OMA" id="MPGLWER"/>
<dbReference type="OrthoDB" id="10018535at2759"/>
<dbReference type="PhylomeDB" id="Q9D3F7"/>
<dbReference type="TreeFam" id="TF105007"/>
<dbReference type="Reactome" id="R-MMU-5628897">
    <property type="pathway name" value="TP53 Regulates Metabolic Genes"/>
</dbReference>
<dbReference type="BioGRID-ORCS" id="74747">
    <property type="hits" value="6 hits in 78 CRISPR screens"/>
</dbReference>
<dbReference type="ChiTaRS" id="Ddit4">
    <property type="organism name" value="mouse"/>
</dbReference>
<dbReference type="PRO" id="PR:Q9D3F7"/>
<dbReference type="Proteomes" id="UP000000589">
    <property type="component" value="Chromosome 10"/>
</dbReference>
<dbReference type="RNAct" id="Q9D3F7">
    <property type="molecule type" value="protein"/>
</dbReference>
<dbReference type="Bgee" id="ENSMUSG00000020108">
    <property type="expression patterns" value="Expressed in aortic valve and 265 other cell types or tissues"/>
</dbReference>
<dbReference type="ExpressionAtlas" id="Q9D3F7">
    <property type="expression patterns" value="baseline and differential"/>
</dbReference>
<dbReference type="GO" id="GO:0005737">
    <property type="term" value="C:cytoplasm"/>
    <property type="evidence" value="ECO:0000250"/>
    <property type="project" value="UniProtKB"/>
</dbReference>
<dbReference type="GO" id="GO:0005829">
    <property type="term" value="C:cytosol"/>
    <property type="evidence" value="ECO:0007669"/>
    <property type="project" value="UniProtKB-SubCell"/>
</dbReference>
<dbReference type="GO" id="GO:0005739">
    <property type="term" value="C:mitochondrion"/>
    <property type="evidence" value="ECO:0000314"/>
    <property type="project" value="MGI"/>
</dbReference>
<dbReference type="GO" id="GO:0071889">
    <property type="term" value="F:14-3-3 protein binding"/>
    <property type="evidence" value="ECO:0000314"/>
    <property type="project" value="MGI"/>
</dbReference>
<dbReference type="GO" id="GO:0007420">
    <property type="term" value="P:brain development"/>
    <property type="evidence" value="ECO:0000250"/>
    <property type="project" value="UniProtKB"/>
</dbReference>
<dbReference type="GO" id="GO:0071549">
    <property type="term" value="P:cellular response to dexamethasone stimulus"/>
    <property type="evidence" value="ECO:0000314"/>
    <property type="project" value="MGI"/>
</dbReference>
<dbReference type="GO" id="GO:0051607">
    <property type="term" value="P:defense response to virus"/>
    <property type="evidence" value="ECO:0007669"/>
    <property type="project" value="UniProtKB-KW"/>
</dbReference>
<dbReference type="GO" id="GO:0035556">
    <property type="term" value="P:intracellular signal transduction"/>
    <property type="evidence" value="ECO:0000250"/>
    <property type="project" value="UniProtKB"/>
</dbReference>
<dbReference type="GO" id="GO:0042771">
    <property type="term" value="P:intrinsic apoptotic signaling pathway in response to DNA damage by p53 class mediator"/>
    <property type="evidence" value="ECO:0000315"/>
    <property type="project" value="UniProtKB"/>
</dbReference>
<dbReference type="GO" id="GO:0045820">
    <property type="term" value="P:negative regulation of glycolytic process"/>
    <property type="evidence" value="ECO:0000315"/>
    <property type="project" value="MGI"/>
</dbReference>
<dbReference type="GO" id="GO:0032007">
    <property type="term" value="P:negative regulation of TOR signaling"/>
    <property type="evidence" value="ECO:0000315"/>
    <property type="project" value="MGI"/>
</dbReference>
<dbReference type="GO" id="GO:0030182">
    <property type="term" value="P:neuron differentiation"/>
    <property type="evidence" value="ECO:0000250"/>
    <property type="project" value="UniProtKB"/>
</dbReference>
<dbReference type="GO" id="GO:0001764">
    <property type="term" value="P:neuron migration"/>
    <property type="evidence" value="ECO:0000250"/>
    <property type="project" value="UniProtKB"/>
</dbReference>
<dbReference type="GO" id="GO:0048011">
    <property type="term" value="P:neurotrophin TRK receptor signaling pathway"/>
    <property type="evidence" value="ECO:0000250"/>
    <property type="project" value="UniProtKB"/>
</dbReference>
<dbReference type="GO" id="GO:0032984">
    <property type="term" value="P:protein-containing complex disassembly"/>
    <property type="evidence" value="ECO:0000315"/>
    <property type="project" value="MGI"/>
</dbReference>
<dbReference type="GO" id="GO:0072593">
    <property type="term" value="P:reactive oxygen species metabolic process"/>
    <property type="evidence" value="ECO:0000315"/>
    <property type="project" value="MGI"/>
</dbReference>
<dbReference type="GO" id="GO:0001666">
    <property type="term" value="P:response to hypoxia"/>
    <property type="evidence" value="ECO:0000315"/>
    <property type="project" value="MGI"/>
</dbReference>
<dbReference type="FunFam" id="3.90.470.40:FF:000001">
    <property type="entry name" value="DNA damage-inducible transcript 4 protein"/>
    <property type="match status" value="1"/>
</dbReference>
<dbReference type="Gene3D" id="3.90.470.40">
    <property type="entry name" value="RTP801-like"/>
    <property type="match status" value="1"/>
</dbReference>
<dbReference type="InterPro" id="IPR012918">
    <property type="entry name" value="RTP801-like"/>
</dbReference>
<dbReference type="InterPro" id="IPR038281">
    <property type="entry name" value="RTP801-like_C_sf"/>
</dbReference>
<dbReference type="PANTHER" id="PTHR12478:SF7">
    <property type="entry name" value="DNA DAMAGE-INDUCIBLE TRANSCRIPT 4 PROTEIN"/>
    <property type="match status" value="1"/>
</dbReference>
<dbReference type="PANTHER" id="PTHR12478">
    <property type="entry name" value="DNA-DAMAGE-INDUCIBLE TRANSCRIPT 4 PROTEIN DDIT4"/>
    <property type="match status" value="1"/>
</dbReference>
<dbReference type="Pfam" id="PF07809">
    <property type="entry name" value="RTP801_C"/>
    <property type="match status" value="1"/>
</dbReference>
<evidence type="ECO:0000250" key="1"/>
<evidence type="ECO:0000250" key="2">
    <source>
        <dbReference type="UniProtKB" id="Q9NX09"/>
    </source>
</evidence>
<evidence type="ECO:0000256" key="3">
    <source>
        <dbReference type="SAM" id="MobiDB-lite"/>
    </source>
</evidence>
<evidence type="ECO:0000269" key="4">
    <source>
    </source>
</evidence>
<evidence type="ECO:0000269" key="5">
    <source>
    </source>
</evidence>
<evidence type="ECO:0000269" key="6">
    <source>
    </source>
</evidence>
<evidence type="ECO:0000269" key="7">
    <source>
    </source>
</evidence>
<evidence type="ECO:0000269" key="8">
    <source>
    </source>
</evidence>
<evidence type="ECO:0000269" key="9">
    <source>
    </source>
</evidence>
<evidence type="ECO:0000269" key="10">
    <source>
    </source>
</evidence>
<evidence type="ECO:0000269" key="11">
    <source>
    </source>
</evidence>
<evidence type="ECO:0000269" key="12">
    <source>
    </source>
</evidence>
<evidence type="ECO:0000269" key="13">
    <source>
    </source>
</evidence>
<evidence type="ECO:0000269" key="14">
    <source>
    </source>
</evidence>
<evidence type="ECO:0000305" key="15"/>
<keyword id="KW-0051">Antiviral defense</keyword>
<keyword id="KW-0053">Apoptosis</keyword>
<keyword id="KW-0963">Cytoplasm</keyword>
<keyword id="KW-0496">Mitochondrion</keyword>
<keyword id="KW-0597">Phosphoprotein</keyword>
<keyword id="KW-1185">Reference proteome</keyword>
<keyword id="KW-0832">Ubl conjugation</keyword>
<organism>
    <name type="scientific">Mus musculus</name>
    <name type="common">Mouse</name>
    <dbReference type="NCBI Taxonomy" id="10090"/>
    <lineage>
        <taxon>Eukaryota</taxon>
        <taxon>Metazoa</taxon>
        <taxon>Chordata</taxon>
        <taxon>Craniata</taxon>
        <taxon>Vertebrata</taxon>
        <taxon>Euteleostomi</taxon>
        <taxon>Mammalia</taxon>
        <taxon>Eutheria</taxon>
        <taxon>Euarchontoglires</taxon>
        <taxon>Glires</taxon>
        <taxon>Rodentia</taxon>
        <taxon>Myomorpha</taxon>
        <taxon>Muroidea</taxon>
        <taxon>Muridae</taxon>
        <taxon>Murinae</taxon>
        <taxon>Mus</taxon>
        <taxon>Mus</taxon>
    </lineage>
</organism>
<feature type="chain" id="PRO_0000307198" description="DNA damage-inducible transcript 4 protein">
    <location>
        <begin position="1"/>
        <end position="229"/>
    </location>
</feature>
<feature type="region of interest" description="Disordered" evidence="3">
    <location>
        <begin position="1"/>
        <end position="68"/>
    </location>
</feature>
<feature type="compositionally biased region" description="Low complexity" evidence="3">
    <location>
        <begin position="9"/>
        <end position="18"/>
    </location>
</feature>
<feature type="modified residue" description="Phosphoserine" evidence="2">
    <location>
        <position position="16"/>
    </location>
</feature>
<feature type="modified residue" description="Phosphothreonine" evidence="2">
    <location>
        <position position="20"/>
    </location>
</feature>
<feature type="modified residue" description="Phosphoserine" evidence="2">
    <location>
        <position position="118"/>
    </location>
</feature>
<gene>
    <name type="primary">Ddit4</name>
    <name type="synonym">Dig2</name>
    <name type="synonym">Redd1</name>
    <name type="synonym">Rtp801</name>
</gene>
<accession>Q9D3F7</accession>
<sequence>MPSLWDRFSSSSSSSSSSRTPAADRPPRSAWGSAAREEGLDRCASLESSDCESLDSSNSGFGPEEDSSYLDGVSLPDFELLSDPEDEHLCANLMQLLQESLSQARLGSRRPARLLMPSQLVSQVGKELLRLAYSEPCGLRGALLDVCVEQGKSCHSVAQLALDPSLVPTFQLTLVLRLDSRLWPKIQGLLSSANSSLVPGYSQSLTLSTGFRVIKKKLYSSEQLLIEEC</sequence>
<proteinExistence type="evidence at protein level"/>